<name>TS29_TITSE</name>
<organism>
    <name type="scientific">Tityus serrulatus</name>
    <name type="common">Brazilian scorpion</name>
    <dbReference type="NCBI Taxonomy" id="6887"/>
    <lineage>
        <taxon>Eukaryota</taxon>
        <taxon>Metazoa</taxon>
        <taxon>Ecdysozoa</taxon>
        <taxon>Arthropoda</taxon>
        <taxon>Chelicerata</taxon>
        <taxon>Arachnida</taxon>
        <taxon>Scorpiones</taxon>
        <taxon>Buthida</taxon>
        <taxon>Buthoidea</taxon>
        <taxon>Buthidae</taxon>
        <taxon>Tityus</taxon>
    </lineage>
</organism>
<proteinExistence type="inferred from homology"/>
<sequence>MSPLFVVLLIATTTFYHSDAFAVKRDHHMCDRTGKACLNNAECCRNEKCVLVDPNIRCFTVPCGTACVKR</sequence>
<keyword id="KW-0964">Secreted</keyword>
<keyword id="KW-0732">Signal</keyword>
<keyword id="KW-0800">Toxin</keyword>
<accession>A0A218QX39</accession>
<reference evidence="6" key="1">
    <citation type="journal article" date="2018" name="PLoS ONE">
        <title>Proteomic endorsed transcriptomic profiles of venom glands from Tityus obscurus and T. serrulatus scorpions.</title>
        <authorList>
            <person name="de Oliveira U.C."/>
            <person name="Nishiyama M.Y. Jr."/>
            <person name="Dos Santos M.B.V."/>
            <person name="Santos-da-Silva A.P."/>
            <person name="Chalkidis H.M."/>
            <person name="Souza-Imberg A."/>
            <person name="Candido D.M."/>
            <person name="Yamanouye N."/>
            <person name="Dorce V.A.C."/>
            <person name="Junqueira-de-Azevedo I.L.M."/>
        </authorList>
    </citation>
    <scope>NUCLEOTIDE SEQUENCE [MRNA]</scope>
    <source>
        <tissue>Telson</tissue>
    </source>
</reference>
<reference evidence="7" key="2">
    <citation type="journal article" date="2021" name="Toxicon">
        <title>Novel components of Tityus serrulatus venom: a transcriptomic approach.</title>
        <authorList>
            <person name="Kalapothakis Y."/>
            <person name="Miranda K."/>
            <person name="Pereira A.H."/>
            <person name="Witt A.S.A."/>
            <person name="Marani C."/>
            <person name="Martins A.P."/>
            <person name="Leal H.G."/>
            <person name="Campos-Junior E."/>
            <person name="Pimenta A.M.C."/>
            <person name="Borges A."/>
            <person name="Chavez-Olortegui C."/>
            <person name="Kalapothakis E."/>
        </authorList>
    </citation>
    <scope>NUCLEOTIDE SEQUENCE [MRNA]</scope>
    <source>
        <tissue>Telson</tissue>
    </source>
</reference>
<feature type="signal peptide" evidence="1">
    <location>
        <begin position="1"/>
        <end position="20"/>
    </location>
</feature>
<feature type="chain" id="PRO_5013210984" description="Putative venom toxin Ts29">
    <location>
        <begin position="21"/>
        <end position="70"/>
    </location>
</feature>
<protein>
    <recommendedName>
        <fullName evidence="2">Putative venom toxin Ts29</fullName>
    </recommendedName>
    <alternativeName>
        <fullName evidence="3">Tityustoxin-29</fullName>
    </alternativeName>
</protein>
<evidence type="ECO:0000255" key="1"/>
<evidence type="ECO:0000303" key="2">
    <source>
    </source>
</evidence>
<evidence type="ECO:0000305" key="3"/>
<evidence type="ECO:0000305" key="4">
    <source>
    </source>
</evidence>
<evidence type="ECO:0000305" key="5">
    <source>
    </source>
</evidence>
<evidence type="ECO:0000312" key="6">
    <source>
        <dbReference type="EMBL" id="JAW07011.1"/>
    </source>
</evidence>
<evidence type="ECO:0000312" key="7">
    <source>
        <dbReference type="EMBL" id="QPD99057.1"/>
    </source>
</evidence>
<comment type="subcellular location">
    <subcellularLocation>
        <location evidence="4 5">Secreted</location>
    </subcellularLocation>
</comment>
<comment type="tissue specificity">
    <text evidence="4 5">Expressed by the venom gland.</text>
</comment>
<dbReference type="EMBL" id="GEUW01000034">
    <property type="protein sequence ID" value="JAW07011.1"/>
    <property type="molecule type" value="mRNA"/>
</dbReference>
<dbReference type="EMBL" id="MT450721">
    <property type="protein sequence ID" value="QPD99057.1"/>
    <property type="molecule type" value="mRNA"/>
</dbReference>
<dbReference type="SMR" id="A0A218QX39"/>
<dbReference type="GO" id="GO:0005576">
    <property type="term" value="C:extracellular region"/>
    <property type="evidence" value="ECO:0007669"/>
    <property type="project" value="UniProtKB-SubCell"/>
</dbReference>
<dbReference type="GO" id="GO:0090729">
    <property type="term" value="F:toxin activity"/>
    <property type="evidence" value="ECO:0007669"/>
    <property type="project" value="UniProtKB-KW"/>
</dbReference>